<dbReference type="EMBL" id="M67514">
    <property type="status" value="NOT_ANNOTATED_CDS"/>
    <property type="molecule type" value="Genomic_RNA"/>
</dbReference>
<dbReference type="GO" id="GO:0030430">
    <property type="term" value="C:host cell cytoplasm"/>
    <property type="evidence" value="ECO:0007669"/>
    <property type="project" value="UniProtKB-SubCell"/>
</dbReference>
<dbReference type="GO" id="GO:0044196">
    <property type="term" value="C:host cell nucleolus"/>
    <property type="evidence" value="ECO:0007669"/>
    <property type="project" value="UniProtKB-SubCell"/>
</dbReference>
<dbReference type="GO" id="GO:0003723">
    <property type="term" value="F:RNA binding"/>
    <property type="evidence" value="ECO:0007669"/>
    <property type="project" value="UniProtKB-KW"/>
</dbReference>
<dbReference type="GO" id="GO:0051028">
    <property type="term" value="P:mRNA transport"/>
    <property type="evidence" value="ECO:0007669"/>
    <property type="project" value="UniProtKB-KW"/>
</dbReference>
<name>REX_HTL1F</name>
<comment type="function">
    <text evidence="1">Rex escorts unspliced gag-pro-pol and singly spliced env mRNAs out of the nucleus of infected cells. These mRNAs carry a recognition sequence called Rex responsive element (RxRE or XRE) located at the 3' region of the long terminal repeat (LTR). This function is essential since most HTLV proteins are translated from unspliced or partially spliced pre-mRNAs that cannot exit the nucleus by the pathway used by fully processed cellular mRNAs. Rex itself is translated from a fully spliced mRNA that probably readily exits the nucleus. Rex's nuclear localization signal (NLS) binds directly to KPNB1/importin beta-1 without previous binding to KPNA1/importin alpha-1. KPNB1 binds to the GDP bound form of RAN (Ran-GDP) and targets Rex to the nucleus. In the nucleus, the conversion from Ran-GDP to Ran-GTP dissociates Rex from KPNB1 and allows Rex's binding to the RRE in viral pre-mRNAs. Rex multimerizes on the RRE via cooperative assembly. This multimerization is critical for its full biological activity, since it may shield the viral RNA from being spliced or down-regulated, and probably exposes Rex's nuclear export signal (NES) to the surface. Rex can then form a complex with XPO1/CRM1, RANBP3 and Ran-GTP, leading to nuclear export of the complex. Conversion from Ran-GTP to Ran-GDP mediates dissociation of the Rex/RRE/XPO1/RANBP3/RAN complex, so that Rex can return to the nucleus for a subsequent round of export (By similarity).</text>
</comment>
<comment type="subunit">
    <text evidence="1 3">Homomultimer. Multimeric assembly is essential for activity and involves XPO1. Binds to human XPO1 and KPNB1 (By similarity). Interacts (via N-terminal nuclear localization signal) with human NPM1.</text>
</comment>
<comment type="subcellular location">
    <molecule>Isoform Rex</molecule>
    <subcellularLocation>
        <location evidence="1">Host nucleus</location>
        <location evidence="1">Host nucleolus</location>
    </subcellularLocation>
    <subcellularLocation>
        <location evidence="1">Host cytoplasm</location>
    </subcellularLocation>
    <text evidence="1">The presence of both nuclear import and nuclear export signals leads to continuous shuttling between the nucleus and cytoplasm.</text>
</comment>
<comment type="subcellular location">
    <molecule>Isoform p21Rex</molecule>
    <subcellularLocation>
        <location evidence="4">Host cytoplasm</location>
    </subcellularLocation>
</comment>
<comment type="alternative products">
    <event type="alternative splicing"/>
    <isoform>
        <id>P0C207-1</id>
        <name>Rex</name>
        <name>p27Rex</name>
        <sequence type="displayed"/>
    </isoform>
    <isoform>
        <id>P0C207-2</id>
        <name>p21Rex</name>
        <name>p21</name>
        <sequence type="described" ref="VSP_021541"/>
    </isoform>
</comment>
<comment type="induction">
    <text>Down-regulated by P30II.</text>
</comment>
<comment type="domain">
    <text evidence="1">The RNA-binding motif binds to the RxRE, a complex secondary structure consisting of four stem loops and a long stretch of stem structure, present in incompletely spliced viral pre-mRNAs. This region also contains the NLS which mediates nuclear localization. These overlapping functions prevent Rex bound to RxRE from undesirable return to the nucleus. When Rex binds the RxRE, the NLS becomes masked while the NES remains accessible. The leucine-rich NES mediates binding to human XPO1 (By similarity).</text>
</comment>
<comment type="PTM">
    <text evidence="1">Phosphorylated.</text>
</comment>
<comment type="miscellaneous">
    <text>HTLV-1 lineages are divided in four clades, A (Cosmopolitan), B (Central African group), C (Melanesian group) and D (New Central African group).</text>
</comment>
<comment type="similarity">
    <text evidence="4">Belongs to the deltaretrovirus Rex protein family.</text>
</comment>
<organismHost>
    <name type="scientific">Homo sapiens</name>
    <name type="common">Human</name>
    <dbReference type="NCBI Taxonomy" id="9606"/>
</organismHost>
<evidence type="ECO:0000250" key="1"/>
<evidence type="ECO:0000256" key="2">
    <source>
        <dbReference type="SAM" id="MobiDB-lite"/>
    </source>
</evidence>
<evidence type="ECO:0000269" key="3">
    <source>
    </source>
</evidence>
<evidence type="ECO:0000305" key="4"/>
<accession>P0C207</accession>
<proteinExistence type="evidence at protein level"/>
<sequence length="189" mass="20503">MPKTRRRPRRSQRKRPPTPWPTSQGLDRVFFSDTQSTCLETVYRATGAPSLGDYVRPVYIVTPYWPPVQSIRSPGTPSMDALSAQLYSSLSLDSPPSPPREPLRPSRSLPRRPPIQPPTFHPPSSRPCANTPPSETDTWNPPLGSTSQPCLFQTPASGPKTCTPSGEAPLSACTSTSFPPPSPGPSCPT</sequence>
<reference key="1">
    <citation type="journal article" date="1991" name="Virology">
        <title>Limited sequence variation in human T-lymphotropic virus type 1 isolates from North American and African patients.</title>
        <authorList>
            <person name="Paine E."/>
            <person name="Garcia J."/>
            <person name="Philpott T.C."/>
            <person name="Shaw G."/>
            <person name="Ratner L."/>
        </authorList>
    </citation>
    <scope>NUCLEOTIDE SEQUENCE [GENOMIC RNA]</scope>
</reference>
<reference key="2">
    <citation type="journal article" date="1993" name="J. Biol. Chem.">
        <title>Nucleolar targeting signal of Rex protein of human T-cell leukemia virus type I specifically binds to nucleolar shuttle protein B-23.</title>
        <authorList>
            <person name="Adachi Y."/>
            <person name="Copeland T.D."/>
            <person name="Hatanaka M."/>
            <person name="Oroszlan S."/>
        </authorList>
    </citation>
    <scope>INTERACTION WITH HUMAN NPM1</scope>
</reference>
<reference key="3">
    <citation type="journal article" date="2005" name="Front. Biosci.">
        <title>The human T-cell leukemia virus Rex protein.</title>
        <authorList>
            <person name="Younis I."/>
            <person name="Green P.L."/>
        </authorList>
    </citation>
    <scope>REVIEW</scope>
</reference>
<reference key="4">
    <citation type="journal article" date="2005" name="Oncogene">
        <title>Transcriptional and post-transcriptional gene regulation of HTLV-1.</title>
        <authorList>
            <person name="Kashanchi F."/>
            <person name="Brady J.N."/>
        </authorList>
    </citation>
    <scope>REVIEW</scope>
</reference>
<organism>
    <name type="scientific">Human T-cell leukemia virus 1 (isolate Zaire EL subtype B)</name>
    <name type="common">HTLV-1</name>
    <dbReference type="NCBI Taxonomy" id="39015"/>
    <lineage>
        <taxon>Viruses</taxon>
        <taxon>Riboviria</taxon>
        <taxon>Pararnavirae</taxon>
        <taxon>Artverviricota</taxon>
        <taxon>Revtraviricetes</taxon>
        <taxon>Ortervirales</taxon>
        <taxon>Retroviridae</taxon>
        <taxon>Orthoretrovirinae</taxon>
        <taxon>Deltaretrovirus</taxon>
        <taxon>Primate T-lymphotropic virus 1</taxon>
    </lineage>
</organism>
<protein>
    <recommendedName>
        <fullName>Protein Rex</fullName>
    </recommendedName>
    <alternativeName>
        <fullName>Rev homolog</fullName>
    </alternativeName>
    <alternativeName>
        <fullName>Rex-1</fullName>
    </alternativeName>
    <alternativeName>
        <fullName>p27Rex</fullName>
    </alternativeName>
</protein>
<keyword id="KW-0025">Alternative splicing</keyword>
<keyword id="KW-1035">Host cytoplasm</keyword>
<keyword id="KW-1048">Host nucleus</keyword>
<keyword id="KW-0945">Host-virus interaction</keyword>
<keyword id="KW-0509">mRNA transport</keyword>
<keyword id="KW-0597">Phosphoprotein</keyword>
<keyword id="KW-0694">RNA-binding</keyword>
<keyword id="KW-0813">Transport</keyword>
<feature type="chain" id="PRO_0000259784" description="Protein Rex">
    <location>
        <begin position="1"/>
        <end position="189"/>
    </location>
</feature>
<feature type="region of interest" description="Disordered" evidence="2">
    <location>
        <begin position="1"/>
        <end position="28"/>
    </location>
</feature>
<feature type="region of interest" description="Homomultimerization" evidence="1">
    <location>
        <begin position="56"/>
        <end position="70"/>
    </location>
</feature>
<feature type="region of interest" description="Disordered" evidence="2">
    <location>
        <begin position="84"/>
        <end position="189"/>
    </location>
</feature>
<feature type="region of interest" description="Homomultimerization" evidence="1">
    <location>
        <begin position="123"/>
        <end position="131"/>
    </location>
</feature>
<feature type="short sequence motif" description="Nuclear localization signal, and RNA-binding (RxRE)" evidence="1">
    <location>
        <begin position="2"/>
        <end position="18"/>
    </location>
</feature>
<feature type="short sequence motif" description="Nuclear export signal" evidence="1">
    <location>
        <begin position="82"/>
        <end position="93"/>
    </location>
</feature>
<feature type="compositionally biased region" description="Basic residues" evidence="2">
    <location>
        <begin position="1"/>
        <end position="16"/>
    </location>
</feature>
<feature type="compositionally biased region" description="Low complexity" evidence="2">
    <location>
        <begin position="84"/>
        <end position="94"/>
    </location>
</feature>
<feature type="compositionally biased region" description="Pro residues" evidence="2">
    <location>
        <begin position="111"/>
        <end position="125"/>
    </location>
</feature>
<feature type="compositionally biased region" description="Polar residues" evidence="2">
    <location>
        <begin position="127"/>
        <end position="164"/>
    </location>
</feature>
<feature type="compositionally biased region" description="Pro residues" evidence="2">
    <location>
        <begin position="178"/>
        <end position="189"/>
    </location>
</feature>
<feature type="modified residue" description="Phosphoserine; by host" evidence="1">
    <location>
        <position position="70"/>
    </location>
</feature>
<feature type="modified residue" description="Phosphothreonine; by host" evidence="1">
    <location>
        <position position="174"/>
    </location>
</feature>
<feature type="modified residue" description="Phosphoserine; by host" evidence="1">
    <location>
        <position position="177"/>
    </location>
</feature>
<feature type="splice variant" id="VSP_021541" description="In isoform p21Rex." evidence="4">
    <location>
        <begin position="1"/>
        <end position="78"/>
    </location>
</feature>